<proteinExistence type="inferred from homology"/>
<keyword id="KW-0067">ATP-binding</keyword>
<keyword id="KW-0436">Ligase</keyword>
<keyword id="KW-0474">Menaquinone biosynthesis</keyword>
<keyword id="KW-0547">Nucleotide-binding</keyword>
<keyword id="KW-1185">Reference proteome</keyword>
<evidence type="ECO:0000255" key="1">
    <source>
        <dbReference type="HAMAP-Rule" id="MF_00731"/>
    </source>
</evidence>
<protein>
    <recommendedName>
        <fullName evidence="1">2-succinylbenzoate--CoA ligase</fullName>
        <ecNumber evidence="1">6.2.1.26</ecNumber>
    </recommendedName>
    <alternativeName>
        <fullName evidence="1">o-succinylbenzoyl-CoA synthetase</fullName>
        <shortName evidence="1">OSB-CoA synthetase</shortName>
    </alternativeName>
</protein>
<feature type="chain" id="PRO_0000193176" description="2-succinylbenzoate--CoA ligase">
    <location>
        <begin position="1"/>
        <end position="455"/>
    </location>
</feature>
<accession>P37418</accession>
<dbReference type="EC" id="6.2.1.26" evidence="1"/>
<dbReference type="EMBL" id="AE006468">
    <property type="protein sequence ID" value="AAL21206.1"/>
    <property type="molecule type" value="Genomic_DNA"/>
</dbReference>
<dbReference type="EMBL" id="U02281">
    <property type="protein sequence ID" value="AAA21323.1"/>
    <property type="molecule type" value="Genomic_DNA"/>
</dbReference>
<dbReference type="RefSeq" id="NP_461247.1">
    <property type="nucleotide sequence ID" value="NC_003197.2"/>
</dbReference>
<dbReference type="RefSeq" id="WP_000144677.1">
    <property type="nucleotide sequence ID" value="NC_003197.2"/>
</dbReference>
<dbReference type="SMR" id="P37418"/>
<dbReference type="STRING" id="99287.STM2305"/>
<dbReference type="PaxDb" id="99287-STM2305"/>
<dbReference type="GeneID" id="1253827"/>
<dbReference type="KEGG" id="stm:STM2305"/>
<dbReference type="PATRIC" id="fig|99287.12.peg.2440"/>
<dbReference type="HOGENOM" id="CLU_000022_59_0_6"/>
<dbReference type="OMA" id="DFCAMTP"/>
<dbReference type="PhylomeDB" id="P37418"/>
<dbReference type="BioCyc" id="SENT99287:STM2305-MONOMER"/>
<dbReference type="UniPathway" id="UPA00079"/>
<dbReference type="UniPathway" id="UPA01057">
    <property type="reaction ID" value="UER00166"/>
</dbReference>
<dbReference type="Proteomes" id="UP000001014">
    <property type="component" value="Chromosome"/>
</dbReference>
<dbReference type="GO" id="GO:0005524">
    <property type="term" value="F:ATP binding"/>
    <property type="evidence" value="ECO:0007669"/>
    <property type="project" value="UniProtKB-KW"/>
</dbReference>
<dbReference type="GO" id="GO:0008756">
    <property type="term" value="F:o-succinylbenzoate-CoA ligase activity"/>
    <property type="evidence" value="ECO:0000318"/>
    <property type="project" value="GO_Central"/>
</dbReference>
<dbReference type="GO" id="GO:0009234">
    <property type="term" value="P:menaquinone biosynthetic process"/>
    <property type="evidence" value="ECO:0000318"/>
    <property type="project" value="GO_Central"/>
</dbReference>
<dbReference type="CDD" id="cd17630">
    <property type="entry name" value="OSB_MenE-like"/>
    <property type="match status" value="1"/>
</dbReference>
<dbReference type="Gene3D" id="3.30.300.30">
    <property type="match status" value="1"/>
</dbReference>
<dbReference type="Gene3D" id="3.40.50.12780">
    <property type="entry name" value="N-terminal domain of ligase-like"/>
    <property type="match status" value="1"/>
</dbReference>
<dbReference type="HAMAP" id="MF_00731">
    <property type="entry name" value="MenE"/>
    <property type="match status" value="1"/>
</dbReference>
<dbReference type="InterPro" id="IPR025110">
    <property type="entry name" value="AMP-bd_C"/>
</dbReference>
<dbReference type="InterPro" id="IPR045851">
    <property type="entry name" value="AMP-bd_C_sf"/>
</dbReference>
<dbReference type="InterPro" id="IPR020845">
    <property type="entry name" value="AMP-binding_CS"/>
</dbReference>
<dbReference type="InterPro" id="IPR000873">
    <property type="entry name" value="AMP-dep_synth/lig_dom"/>
</dbReference>
<dbReference type="InterPro" id="IPR042099">
    <property type="entry name" value="ANL_N_sf"/>
</dbReference>
<dbReference type="InterPro" id="IPR010192">
    <property type="entry name" value="MenE"/>
</dbReference>
<dbReference type="NCBIfam" id="TIGR01923">
    <property type="entry name" value="menE"/>
    <property type="match status" value="1"/>
</dbReference>
<dbReference type="NCBIfam" id="NF006539">
    <property type="entry name" value="PRK09029.1"/>
    <property type="match status" value="1"/>
</dbReference>
<dbReference type="PANTHER" id="PTHR43201">
    <property type="entry name" value="ACYL-COA SYNTHETASE"/>
    <property type="match status" value="1"/>
</dbReference>
<dbReference type="PANTHER" id="PTHR43201:SF5">
    <property type="entry name" value="MEDIUM-CHAIN ACYL-COA LIGASE ACSF2, MITOCHONDRIAL"/>
    <property type="match status" value="1"/>
</dbReference>
<dbReference type="Pfam" id="PF00501">
    <property type="entry name" value="AMP-binding"/>
    <property type="match status" value="1"/>
</dbReference>
<dbReference type="Pfam" id="PF13193">
    <property type="entry name" value="AMP-binding_C"/>
    <property type="match status" value="1"/>
</dbReference>
<dbReference type="SUPFAM" id="SSF56801">
    <property type="entry name" value="Acetyl-CoA synthetase-like"/>
    <property type="match status" value="1"/>
</dbReference>
<dbReference type="PROSITE" id="PS00455">
    <property type="entry name" value="AMP_BINDING"/>
    <property type="match status" value="1"/>
</dbReference>
<comment type="function">
    <text evidence="1">Converts 2-succinylbenzoate (OSB) to 2-succinylbenzoyl-CoA (OSB-CoA).</text>
</comment>
<comment type="catalytic activity">
    <reaction evidence="1">
        <text>2-succinylbenzoate + ATP + CoA = 2-succinylbenzoyl-CoA + AMP + diphosphate</text>
        <dbReference type="Rhea" id="RHEA:17009"/>
        <dbReference type="ChEBI" id="CHEBI:18325"/>
        <dbReference type="ChEBI" id="CHEBI:30616"/>
        <dbReference type="ChEBI" id="CHEBI:33019"/>
        <dbReference type="ChEBI" id="CHEBI:57287"/>
        <dbReference type="ChEBI" id="CHEBI:57364"/>
        <dbReference type="ChEBI" id="CHEBI:456215"/>
        <dbReference type="EC" id="6.2.1.26"/>
    </reaction>
</comment>
<comment type="pathway">
    <text evidence="1">Quinol/quinone metabolism; 1,4-dihydroxy-2-naphthoate biosynthesis; 1,4-dihydroxy-2-naphthoate from chorismate: step 5/7.</text>
</comment>
<comment type="pathway">
    <text evidence="1">Quinol/quinone metabolism; menaquinone biosynthesis.</text>
</comment>
<comment type="similarity">
    <text evidence="1">Belongs to the ATP-dependent AMP-binding enzyme family. MenE subfamily.</text>
</comment>
<name>MENE_SALTY</name>
<organism>
    <name type="scientific">Salmonella typhimurium (strain LT2 / SGSC1412 / ATCC 700720)</name>
    <dbReference type="NCBI Taxonomy" id="99287"/>
    <lineage>
        <taxon>Bacteria</taxon>
        <taxon>Pseudomonadati</taxon>
        <taxon>Pseudomonadota</taxon>
        <taxon>Gammaproteobacteria</taxon>
        <taxon>Enterobacterales</taxon>
        <taxon>Enterobacteriaceae</taxon>
        <taxon>Salmonella</taxon>
    </lineage>
</organism>
<reference key="1">
    <citation type="journal article" date="2001" name="Nature">
        <title>Complete genome sequence of Salmonella enterica serovar Typhimurium LT2.</title>
        <authorList>
            <person name="McClelland M."/>
            <person name="Sanderson K.E."/>
            <person name="Spieth J."/>
            <person name="Clifton S.W."/>
            <person name="Latreille P."/>
            <person name="Courtney L."/>
            <person name="Porwollik S."/>
            <person name="Ali J."/>
            <person name="Dante M."/>
            <person name="Du F."/>
            <person name="Hou S."/>
            <person name="Layman D."/>
            <person name="Leonard S."/>
            <person name="Nguyen C."/>
            <person name="Scott K."/>
            <person name="Holmes A."/>
            <person name="Grewal N."/>
            <person name="Mulvaney E."/>
            <person name="Ryan E."/>
            <person name="Sun H."/>
            <person name="Florea L."/>
            <person name="Miller W."/>
            <person name="Stoneking T."/>
            <person name="Nhan M."/>
            <person name="Waterston R."/>
            <person name="Wilson R.K."/>
        </authorList>
    </citation>
    <scope>NUCLEOTIDE SEQUENCE [LARGE SCALE GENOMIC DNA]</scope>
    <source>
        <strain>LT2 / SGSC1412 / ATCC 700720</strain>
    </source>
</reference>
<reference key="2">
    <citation type="journal article" date="1994" name="J. Bacteriol.">
        <title>Isolation and characterization of a gene, pmrD, from Salmonella typhimurium that confers resistance to polymyxin when expressed in multiple copies.</title>
        <authorList>
            <person name="Roland K.L."/>
            <person name="Esther C.R."/>
            <person name="Spitznagel J.K."/>
        </authorList>
    </citation>
    <scope>NUCLEOTIDE SEQUENCE [GENOMIC DNA] OF 228-455</scope>
    <source>
        <strain>LT2</strain>
    </source>
</reference>
<sequence>MTFTDWPWRHWRQVRSQAPALRLNDEVLSWRALCERIDVLAGGFAAQGVREGDGVLLRAGNQPRTLLAWLALMQCGARVLPVNPQLPQTLLEALVPKLTLRFALTLEGENAFSGLTALQIQKSTAAYAVAWQPQRLVSMTLTSGSTGLPKAAVHTCQAHLASAQGVLSLMPFGPQDDWLLSLPLFHVSGQGIMWRWLFAGARMTVRDKQPLEQMLAGCTHASLVPTQLWRLLANRAAVTLKAVLLGGAVIPVELTDQASKQGIRCWCGYGLTEFASTVCAKEADGSDDVGAPLPGREIRIVDNEVWLRAASMAEGYWRDGKLIPLVNDEGWFATRDRGELNHGRLTIAGRLDNLFFSGGEGIQPEEVERVINAHPLVQQAFVVPVEDKEFGHRPVAVVEYASQAGDVNLAEWVRDKLARFQQPVRWLTMPSELKNGGIKISRRALQQWVCENCKN</sequence>
<gene>
    <name evidence="1" type="primary">menE</name>
    <name type="ordered locus">STM2305</name>
</gene>